<feature type="chain" id="PRO_1000199121" description="Histidine--tRNA ligase">
    <location>
        <begin position="1"/>
        <end position="416"/>
    </location>
</feature>
<dbReference type="EC" id="6.1.1.21" evidence="1"/>
<dbReference type="EMBL" id="AP009049">
    <property type="protein sequence ID" value="BAH07818.1"/>
    <property type="molecule type" value="Genomic_DNA"/>
</dbReference>
<dbReference type="RefSeq" id="WP_012103470.1">
    <property type="nucleotide sequence ID" value="NC_011837.1"/>
</dbReference>
<dbReference type="SMR" id="B9E5P3"/>
<dbReference type="KEGG" id="ckr:CKR_2767"/>
<dbReference type="HOGENOM" id="CLU_025113_1_1_9"/>
<dbReference type="Proteomes" id="UP000007969">
    <property type="component" value="Chromosome"/>
</dbReference>
<dbReference type="GO" id="GO:0005737">
    <property type="term" value="C:cytoplasm"/>
    <property type="evidence" value="ECO:0007669"/>
    <property type="project" value="UniProtKB-SubCell"/>
</dbReference>
<dbReference type="GO" id="GO:0005524">
    <property type="term" value="F:ATP binding"/>
    <property type="evidence" value="ECO:0007669"/>
    <property type="project" value="UniProtKB-UniRule"/>
</dbReference>
<dbReference type="GO" id="GO:0140096">
    <property type="term" value="F:catalytic activity, acting on a protein"/>
    <property type="evidence" value="ECO:0007669"/>
    <property type="project" value="UniProtKB-ARBA"/>
</dbReference>
<dbReference type="GO" id="GO:0004821">
    <property type="term" value="F:histidine-tRNA ligase activity"/>
    <property type="evidence" value="ECO:0007669"/>
    <property type="project" value="UniProtKB-UniRule"/>
</dbReference>
<dbReference type="GO" id="GO:0016740">
    <property type="term" value="F:transferase activity"/>
    <property type="evidence" value="ECO:0007669"/>
    <property type="project" value="UniProtKB-ARBA"/>
</dbReference>
<dbReference type="GO" id="GO:0006427">
    <property type="term" value="P:histidyl-tRNA aminoacylation"/>
    <property type="evidence" value="ECO:0007669"/>
    <property type="project" value="UniProtKB-UniRule"/>
</dbReference>
<dbReference type="CDD" id="cd00773">
    <property type="entry name" value="HisRS-like_core"/>
    <property type="match status" value="1"/>
</dbReference>
<dbReference type="CDD" id="cd00859">
    <property type="entry name" value="HisRS_anticodon"/>
    <property type="match status" value="1"/>
</dbReference>
<dbReference type="FunFam" id="3.30.930.10:FF:000005">
    <property type="entry name" value="Histidine--tRNA ligase"/>
    <property type="match status" value="1"/>
</dbReference>
<dbReference type="Gene3D" id="3.40.50.800">
    <property type="entry name" value="Anticodon-binding domain"/>
    <property type="match status" value="1"/>
</dbReference>
<dbReference type="Gene3D" id="3.30.930.10">
    <property type="entry name" value="Bira Bifunctional Protein, Domain 2"/>
    <property type="match status" value="1"/>
</dbReference>
<dbReference type="HAMAP" id="MF_00127">
    <property type="entry name" value="His_tRNA_synth"/>
    <property type="match status" value="1"/>
</dbReference>
<dbReference type="InterPro" id="IPR006195">
    <property type="entry name" value="aa-tRNA-synth_II"/>
</dbReference>
<dbReference type="InterPro" id="IPR045864">
    <property type="entry name" value="aa-tRNA-synth_II/BPL/LPL"/>
</dbReference>
<dbReference type="InterPro" id="IPR004154">
    <property type="entry name" value="Anticodon-bd"/>
</dbReference>
<dbReference type="InterPro" id="IPR036621">
    <property type="entry name" value="Anticodon-bd_dom_sf"/>
</dbReference>
<dbReference type="InterPro" id="IPR015807">
    <property type="entry name" value="His-tRNA-ligase"/>
</dbReference>
<dbReference type="InterPro" id="IPR041715">
    <property type="entry name" value="HisRS-like_core"/>
</dbReference>
<dbReference type="InterPro" id="IPR004516">
    <property type="entry name" value="HisRS/HisZ"/>
</dbReference>
<dbReference type="InterPro" id="IPR033656">
    <property type="entry name" value="HisRS_anticodon"/>
</dbReference>
<dbReference type="NCBIfam" id="TIGR00442">
    <property type="entry name" value="hisS"/>
    <property type="match status" value="1"/>
</dbReference>
<dbReference type="PANTHER" id="PTHR43707:SF1">
    <property type="entry name" value="HISTIDINE--TRNA LIGASE, MITOCHONDRIAL-RELATED"/>
    <property type="match status" value="1"/>
</dbReference>
<dbReference type="PANTHER" id="PTHR43707">
    <property type="entry name" value="HISTIDYL-TRNA SYNTHETASE"/>
    <property type="match status" value="1"/>
</dbReference>
<dbReference type="Pfam" id="PF03129">
    <property type="entry name" value="HGTP_anticodon"/>
    <property type="match status" value="1"/>
</dbReference>
<dbReference type="Pfam" id="PF13393">
    <property type="entry name" value="tRNA-synt_His"/>
    <property type="match status" value="1"/>
</dbReference>
<dbReference type="PIRSF" id="PIRSF001549">
    <property type="entry name" value="His-tRNA_synth"/>
    <property type="match status" value="1"/>
</dbReference>
<dbReference type="SUPFAM" id="SSF52954">
    <property type="entry name" value="Class II aaRS ABD-related"/>
    <property type="match status" value="1"/>
</dbReference>
<dbReference type="SUPFAM" id="SSF55681">
    <property type="entry name" value="Class II aaRS and biotin synthetases"/>
    <property type="match status" value="1"/>
</dbReference>
<dbReference type="PROSITE" id="PS50862">
    <property type="entry name" value="AA_TRNA_LIGASE_II"/>
    <property type="match status" value="1"/>
</dbReference>
<protein>
    <recommendedName>
        <fullName evidence="1">Histidine--tRNA ligase</fullName>
        <ecNumber evidence="1">6.1.1.21</ecNumber>
    </recommendedName>
    <alternativeName>
        <fullName evidence="1">Histidyl-tRNA synthetase</fullName>
        <shortName evidence="1">HisRS</shortName>
    </alternativeName>
</protein>
<name>SYH_CLOK1</name>
<gene>
    <name evidence="1" type="primary">hisS</name>
    <name type="ordered locus">CKR_2767</name>
</gene>
<sequence>MAIQAPKGTKDILPTESYKWHYLEDKFKNIADSYGYREIRTPVFEYTELFQRGVGETTDVVQKEMYTFLDRAGRSLTLKPEGTSPAVRAFVEGSLYNEAQPTKLFYFTPVLRYENVQKGRLREHHQFGIEAFGSREASLDAEVISLAMRIYEELGVDGIELNINSIGCSKCRKEYNDILKTFLSKQYDNICDTCKTRFHKNPMRILDCKEKSCREIVKDAPLMLHHLCDECREHFESLKMYLEGLGIGYKINPLIVRGLDYYSKTVFEIINKNITICGGGRYDYLIEEVGGPKMPAVGFGMGIERTLLTLSENGIEIPKLPYIDLYIGIIGDKARIKALTLTNKLREKNVRCEYDHMNRSVKAEMKYANKINARFTVILGENEIESGIAKFKRMEDGQQFEISLGDLSAILNLTRM</sequence>
<organism>
    <name type="scientific">Clostridium kluyveri (strain NBRC 12016)</name>
    <dbReference type="NCBI Taxonomy" id="583346"/>
    <lineage>
        <taxon>Bacteria</taxon>
        <taxon>Bacillati</taxon>
        <taxon>Bacillota</taxon>
        <taxon>Clostridia</taxon>
        <taxon>Eubacteriales</taxon>
        <taxon>Clostridiaceae</taxon>
        <taxon>Clostridium</taxon>
    </lineage>
</organism>
<evidence type="ECO:0000255" key="1">
    <source>
        <dbReference type="HAMAP-Rule" id="MF_00127"/>
    </source>
</evidence>
<proteinExistence type="inferred from homology"/>
<accession>B9E5P3</accession>
<keyword id="KW-0030">Aminoacyl-tRNA synthetase</keyword>
<keyword id="KW-0067">ATP-binding</keyword>
<keyword id="KW-0963">Cytoplasm</keyword>
<keyword id="KW-0436">Ligase</keyword>
<keyword id="KW-0547">Nucleotide-binding</keyword>
<keyword id="KW-0648">Protein biosynthesis</keyword>
<reference key="1">
    <citation type="submission" date="2005-09" db="EMBL/GenBank/DDBJ databases">
        <title>Complete genome sequence of Clostridium kluyveri and comparative genomics of Clostridia species.</title>
        <authorList>
            <person name="Inui M."/>
            <person name="Nonaka H."/>
            <person name="Shinoda Y."/>
            <person name="Ikenaga Y."/>
            <person name="Abe M."/>
            <person name="Naito K."/>
            <person name="Vertes A.A."/>
            <person name="Yukawa H."/>
        </authorList>
    </citation>
    <scope>NUCLEOTIDE SEQUENCE [LARGE SCALE GENOMIC DNA]</scope>
    <source>
        <strain>NBRC 12016</strain>
    </source>
</reference>
<comment type="catalytic activity">
    <reaction evidence="1">
        <text>tRNA(His) + L-histidine + ATP = L-histidyl-tRNA(His) + AMP + diphosphate + H(+)</text>
        <dbReference type="Rhea" id="RHEA:17313"/>
        <dbReference type="Rhea" id="RHEA-COMP:9665"/>
        <dbReference type="Rhea" id="RHEA-COMP:9689"/>
        <dbReference type="ChEBI" id="CHEBI:15378"/>
        <dbReference type="ChEBI" id="CHEBI:30616"/>
        <dbReference type="ChEBI" id="CHEBI:33019"/>
        <dbReference type="ChEBI" id="CHEBI:57595"/>
        <dbReference type="ChEBI" id="CHEBI:78442"/>
        <dbReference type="ChEBI" id="CHEBI:78527"/>
        <dbReference type="ChEBI" id="CHEBI:456215"/>
        <dbReference type="EC" id="6.1.1.21"/>
    </reaction>
</comment>
<comment type="subunit">
    <text evidence="1">Homodimer.</text>
</comment>
<comment type="subcellular location">
    <subcellularLocation>
        <location evidence="1">Cytoplasm</location>
    </subcellularLocation>
</comment>
<comment type="similarity">
    <text evidence="1">Belongs to the class-II aminoacyl-tRNA synthetase family.</text>
</comment>